<reference key="1">
    <citation type="submission" date="2008-04" db="EMBL/GenBank/DDBJ databases">
        <title>Complete sequence of chromosome of Exiguobacterium sibiricum 255-15.</title>
        <authorList>
            <consortium name="US DOE Joint Genome Institute"/>
            <person name="Copeland A."/>
            <person name="Lucas S."/>
            <person name="Lapidus A."/>
            <person name="Glavina del Rio T."/>
            <person name="Dalin E."/>
            <person name="Tice H."/>
            <person name="Bruce D."/>
            <person name="Goodwin L."/>
            <person name="Pitluck S."/>
            <person name="Kiss H."/>
            <person name="Chertkov O."/>
            <person name="Monk C."/>
            <person name="Brettin T."/>
            <person name="Detter J.C."/>
            <person name="Han C."/>
            <person name="Kuske C.R."/>
            <person name="Schmutz J."/>
            <person name="Larimer F."/>
            <person name="Land M."/>
            <person name="Hauser L."/>
            <person name="Kyrpides N."/>
            <person name="Mikhailova N."/>
            <person name="Vishnivetskaya T."/>
            <person name="Rodrigues D.F."/>
            <person name="Gilichinsky D."/>
            <person name="Tiedje J."/>
            <person name="Richardson P."/>
        </authorList>
    </citation>
    <scope>NUCLEOTIDE SEQUENCE [LARGE SCALE GENOMIC DNA]</scope>
    <source>
        <strain>DSM 17290 / CCUG 55495 / CIP 109462 / JCM 13490 / 255-15</strain>
    </source>
</reference>
<name>MTNA_EXIS2</name>
<comment type="function">
    <text evidence="1">Catalyzes the interconversion of methylthioribose-1-phosphate (MTR-1-P) into methylthioribulose-1-phosphate (MTRu-1-P).</text>
</comment>
<comment type="catalytic activity">
    <reaction evidence="1">
        <text>5-(methylsulfanyl)-alpha-D-ribose 1-phosphate = 5-(methylsulfanyl)-D-ribulose 1-phosphate</text>
        <dbReference type="Rhea" id="RHEA:19989"/>
        <dbReference type="ChEBI" id="CHEBI:58533"/>
        <dbReference type="ChEBI" id="CHEBI:58548"/>
        <dbReference type="EC" id="5.3.1.23"/>
    </reaction>
</comment>
<comment type="pathway">
    <text evidence="1">Amino-acid biosynthesis; L-methionine biosynthesis via salvage pathway; L-methionine from S-methyl-5-thio-alpha-D-ribose 1-phosphate: step 1/6.</text>
</comment>
<comment type="similarity">
    <text evidence="2">Belongs to the eIF-2B alpha/beta/delta subunits family. MtnA subfamily.</text>
</comment>
<feature type="chain" id="PRO_0000357183" description="Methylthioribose-1-phosphate isomerase">
    <location>
        <begin position="1"/>
        <end position="348"/>
    </location>
</feature>
<feature type="active site" description="Proton donor" evidence="1">
    <location>
        <position position="236"/>
    </location>
</feature>
<feature type="binding site" evidence="1">
    <location>
        <begin position="48"/>
        <end position="50"/>
    </location>
    <ligand>
        <name>substrate</name>
    </ligand>
</feature>
<feature type="binding site" evidence="1">
    <location>
        <position position="90"/>
    </location>
    <ligand>
        <name>substrate</name>
    </ligand>
</feature>
<feature type="binding site" evidence="1">
    <location>
        <position position="195"/>
    </location>
    <ligand>
        <name>substrate</name>
    </ligand>
</feature>
<feature type="binding site" evidence="1">
    <location>
        <begin position="246"/>
        <end position="247"/>
    </location>
    <ligand>
        <name>substrate</name>
    </ligand>
</feature>
<feature type="site" description="Transition state stabilizer" evidence="1">
    <location>
        <position position="156"/>
    </location>
</feature>
<proteinExistence type="inferred from homology"/>
<organism>
    <name type="scientific">Exiguobacterium sibiricum (strain DSM 17290 / CCUG 55495 / CIP 109462 / JCM 13490 / 255-15)</name>
    <dbReference type="NCBI Taxonomy" id="262543"/>
    <lineage>
        <taxon>Bacteria</taxon>
        <taxon>Bacillati</taxon>
        <taxon>Bacillota</taxon>
        <taxon>Bacilli</taxon>
        <taxon>Bacillales</taxon>
        <taxon>Bacillales Family XII. Incertae Sedis</taxon>
        <taxon>Exiguobacterium</taxon>
    </lineage>
</organism>
<sequence>MSQFVQSIIYENRTVTILDQTRLPEEEHYEIIHDLAQAIDAIKQLRVRGAPAISLFGGFVLVQEAFRTTGTLAEAKQELLEVSAQLLATRPTAVNLRNVLDELNQLIVSATTLKELPVRLEQKALELYQTDAKTSRQIGVHALELFESGDRVLTICNAGSIATAAYGTALAPFYLAKEQGIPLSVYASETRPLLQGARLTTWELQRAGIDVTLITDNMVAHTIKEKQITAIIVGADRITRNGDTANKIGTFQLALLARAFGIPFYVAAPLSTFDFTSLSGDEIEIEERDAREVTQLAGKATAPAGVPVFNPAFDVTPHDLITAIITELGVIEHPDVETIKRTIGQHTH</sequence>
<accession>B1YIY4</accession>
<dbReference type="EC" id="5.3.1.23" evidence="1"/>
<dbReference type="EMBL" id="CP001022">
    <property type="protein sequence ID" value="ACB59914.1"/>
    <property type="molecule type" value="Genomic_DNA"/>
</dbReference>
<dbReference type="RefSeq" id="WP_012369338.1">
    <property type="nucleotide sequence ID" value="NC_010556.1"/>
</dbReference>
<dbReference type="SMR" id="B1YIY4"/>
<dbReference type="STRING" id="262543.Exig_0432"/>
<dbReference type="KEGG" id="esi:Exig_0432"/>
<dbReference type="eggNOG" id="COG0182">
    <property type="taxonomic scope" value="Bacteria"/>
</dbReference>
<dbReference type="HOGENOM" id="CLU_016218_1_2_9"/>
<dbReference type="OrthoDB" id="9803436at2"/>
<dbReference type="UniPathway" id="UPA00904">
    <property type="reaction ID" value="UER00874"/>
</dbReference>
<dbReference type="Proteomes" id="UP000001681">
    <property type="component" value="Chromosome"/>
</dbReference>
<dbReference type="GO" id="GO:0046523">
    <property type="term" value="F:S-methyl-5-thioribose-1-phosphate isomerase activity"/>
    <property type="evidence" value="ECO:0007669"/>
    <property type="project" value="UniProtKB-UniRule"/>
</dbReference>
<dbReference type="GO" id="GO:0019509">
    <property type="term" value="P:L-methionine salvage from methylthioadenosine"/>
    <property type="evidence" value="ECO:0007669"/>
    <property type="project" value="UniProtKB-UniRule"/>
</dbReference>
<dbReference type="FunFam" id="1.20.120.420:FF:000003">
    <property type="entry name" value="Methylthioribose-1-phosphate isomerase"/>
    <property type="match status" value="1"/>
</dbReference>
<dbReference type="FunFam" id="3.40.50.10470:FF:000006">
    <property type="entry name" value="Methylthioribose-1-phosphate isomerase"/>
    <property type="match status" value="1"/>
</dbReference>
<dbReference type="Gene3D" id="1.20.120.420">
    <property type="entry name" value="translation initiation factor eif-2b, domain 1"/>
    <property type="match status" value="1"/>
</dbReference>
<dbReference type="Gene3D" id="3.40.50.10470">
    <property type="entry name" value="Translation initiation factor eif-2b, domain 2"/>
    <property type="match status" value="1"/>
</dbReference>
<dbReference type="HAMAP" id="MF_01678">
    <property type="entry name" value="Salvage_MtnA"/>
    <property type="match status" value="1"/>
</dbReference>
<dbReference type="InterPro" id="IPR000649">
    <property type="entry name" value="IF-2B-related"/>
</dbReference>
<dbReference type="InterPro" id="IPR005251">
    <property type="entry name" value="IF-M1Pi"/>
</dbReference>
<dbReference type="InterPro" id="IPR042529">
    <property type="entry name" value="IF_2B-like_C"/>
</dbReference>
<dbReference type="InterPro" id="IPR011559">
    <property type="entry name" value="Initiation_fac_2B_a/b/d"/>
</dbReference>
<dbReference type="InterPro" id="IPR027363">
    <property type="entry name" value="M1Pi_N"/>
</dbReference>
<dbReference type="InterPro" id="IPR037171">
    <property type="entry name" value="NagB/RpiA_transferase-like"/>
</dbReference>
<dbReference type="NCBIfam" id="TIGR00524">
    <property type="entry name" value="eIF-2B_rel"/>
    <property type="match status" value="1"/>
</dbReference>
<dbReference type="NCBIfam" id="NF004326">
    <property type="entry name" value="PRK05720.1"/>
    <property type="match status" value="1"/>
</dbReference>
<dbReference type="NCBIfam" id="TIGR00512">
    <property type="entry name" value="salvage_mtnA"/>
    <property type="match status" value="1"/>
</dbReference>
<dbReference type="PANTHER" id="PTHR43475">
    <property type="entry name" value="METHYLTHIORIBOSE-1-PHOSPHATE ISOMERASE"/>
    <property type="match status" value="1"/>
</dbReference>
<dbReference type="PANTHER" id="PTHR43475:SF4">
    <property type="entry name" value="METHYLTHIORIBOSE-1-PHOSPHATE ISOMERASE"/>
    <property type="match status" value="1"/>
</dbReference>
<dbReference type="Pfam" id="PF01008">
    <property type="entry name" value="IF-2B"/>
    <property type="match status" value="1"/>
</dbReference>
<dbReference type="SUPFAM" id="SSF100950">
    <property type="entry name" value="NagB/RpiA/CoA transferase-like"/>
    <property type="match status" value="1"/>
</dbReference>
<gene>
    <name evidence="1" type="primary">mtnA</name>
    <name type="ordered locus">Exig_0432</name>
</gene>
<evidence type="ECO:0000255" key="1">
    <source>
        <dbReference type="HAMAP-Rule" id="MF_01678"/>
    </source>
</evidence>
<evidence type="ECO:0000305" key="2"/>
<keyword id="KW-0028">Amino-acid biosynthesis</keyword>
<keyword id="KW-0413">Isomerase</keyword>
<keyword id="KW-0486">Methionine biosynthesis</keyword>
<keyword id="KW-1185">Reference proteome</keyword>
<protein>
    <recommendedName>
        <fullName evidence="1">Methylthioribose-1-phosphate isomerase</fullName>
        <shortName evidence="1">M1Pi</shortName>
        <shortName evidence="1">MTR-1-P isomerase</shortName>
        <ecNumber evidence="1">5.3.1.23</ecNumber>
    </recommendedName>
    <alternativeName>
        <fullName evidence="1">S-methyl-5-thioribose-1-phosphate isomerase</fullName>
    </alternativeName>
</protein>